<sequence length="117" mass="13035">MKYPLLALIKLYQWTISPLLGPVCKYYPSCSHYGYQAIDRHGAIKGTALTAWRILRCNPWSLGGVDHVPPRKRPRWHEMLRNAWRARKGGPSAAEPAIEGHIPSSPAAETPSHVQGA</sequence>
<comment type="function">
    <text evidence="1">Could be involved in insertion of integral membrane proteins into the membrane.</text>
</comment>
<comment type="subcellular location">
    <subcellularLocation>
        <location evidence="1">Cell membrane</location>
        <topology evidence="1">Peripheral membrane protein</topology>
        <orientation evidence="1">Cytoplasmic side</orientation>
    </subcellularLocation>
</comment>
<comment type="similarity">
    <text evidence="1">Belongs to the UPF0161 family.</text>
</comment>
<keyword id="KW-1003">Cell membrane</keyword>
<keyword id="KW-0472">Membrane</keyword>
<keyword id="KW-1185">Reference proteome</keyword>
<protein>
    <recommendedName>
        <fullName evidence="1">Putative membrane protein insertion efficiency factor</fullName>
    </recommendedName>
</protein>
<organism>
    <name type="scientific">Streptomyces avermitilis (strain ATCC 31267 / DSM 46492 / JCM 5070 / NBRC 14893 / NCIMB 12804 / NRRL 8165 / MA-4680)</name>
    <dbReference type="NCBI Taxonomy" id="227882"/>
    <lineage>
        <taxon>Bacteria</taxon>
        <taxon>Bacillati</taxon>
        <taxon>Actinomycetota</taxon>
        <taxon>Actinomycetes</taxon>
        <taxon>Kitasatosporales</taxon>
        <taxon>Streptomycetaceae</taxon>
        <taxon>Streptomyces</taxon>
    </lineage>
</organism>
<name>YIDD_STRAW</name>
<evidence type="ECO:0000255" key="1">
    <source>
        <dbReference type="HAMAP-Rule" id="MF_00386"/>
    </source>
</evidence>
<evidence type="ECO:0000256" key="2">
    <source>
        <dbReference type="SAM" id="MobiDB-lite"/>
    </source>
</evidence>
<feature type="chain" id="PRO_0000171878" description="Putative membrane protein insertion efficiency factor">
    <location>
        <begin position="1"/>
        <end position="117"/>
    </location>
</feature>
<feature type="region of interest" description="Disordered" evidence="2">
    <location>
        <begin position="87"/>
        <end position="117"/>
    </location>
</feature>
<reference key="1">
    <citation type="journal article" date="2001" name="Proc. Natl. Acad. Sci. U.S.A.">
        <title>Genome sequence of an industrial microorganism Streptomyces avermitilis: deducing the ability of producing secondary metabolites.</title>
        <authorList>
            <person name="Omura S."/>
            <person name="Ikeda H."/>
            <person name="Ishikawa J."/>
            <person name="Hanamoto A."/>
            <person name="Takahashi C."/>
            <person name="Shinose M."/>
            <person name="Takahashi Y."/>
            <person name="Horikawa H."/>
            <person name="Nakazawa H."/>
            <person name="Osonoe T."/>
            <person name="Kikuchi H."/>
            <person name="Shiba T."/>
            <person name="Sakaki Y."/>
            <person name="Hattori M."/>
        </authorList>
    </citation>
    <scope>NUCLEOTIDE SEQUENCE [LARGE SCALE GENOMIC DNA]</scope>
    <source>
        <strain>ATCC 31267 / DSM 46492 / JCM 5070 / NBRC 14893 / NCIMB 12804 / NRRL 8165 / MA-4680</strain>
    </source>
</reference>
<reference key="2">
    <citation type="journal article" date="2003" name="Nat. Biotechnol.">
        <title>Complete genome sequence and comparative analysis of the industrial microorganism Streptomyces avermitilis.</title>
        <authorList>
            <person name="Ikeda H."/>
            <person name="Ishikawa J."/>
            <person name="Hanamoto A."/>
            <person name="Shinose M."/>
            <person name="Kikuchi H."/>
            <person name="Shiba T."/>
            <person name="Sakaki Y."/>
            <person name="Hattori M."/>
            <person name="Omura S."/>
        </authorList>
    </citation>
    <scope>NUCLEOTIDE SEQUENCE [LARGE SCALE GENOMIC DNA]</scope>
    <source>
        <strain>ATCC 31267 / DSM 46492 / JCM 5070 / NBRC 14893 / NCIMB 12804 / NRRL 8165 / MA-4680</strain>
    </source>
</reference>
<gene>
    <name type="ordered locus">SAV_4313</name>
</gene>
<dbReference type="EMBL" id="BA000030">
    <property type="protein sequence ID" value="BAC72025.1"/>
    <property type="molecule type" value="Genomic_DNA"/>
</dbReference>
<dbReference type="GeneID" id="41541394"/>
<dbReference type="KEGG" id="sma:SAVERM_4313"/>
<dbReference type="eggNOG" id="COG0759">
    <property type="taxonomic scope" value="Bacteria"/>
</dbReference>
<dbReference type="HOGENOM" id="CLU_144811_2_0_11"/>
<dbReference type="OrthoDB" id="9801753at2"/>
<dbReference type="Proteomes" id="UP000000428">
    <property type="component" value="Chromosome"/>
</dbReference>
<dbReference type="GO" id="GO:0005886">
    <property type="term" value="C:plasma membrane"/>
    <property type="evidence" value="ECO:0007669"/>
    <property type="project" value="UniProtKB-SubCell"/>
</dbReference>
<dbReference type="HAMAP" id="MF_00386">
    <property type="entry name" value="UPF0161_YidD"/>
    <property type="match status" value="1"/>
</dbReference>
<dbReference type="InterPro" id="IPR002696">
    <property type="entry name" value="Membr_insert_effic_factor_YidD"/>
</dbReference>
<dbReference type="NCBIfam" id="TIGR00278">
    <property type="entry name" value="membrane protein insertion efficiency factor YidD"/>
    <property type="match status" value="1"/>
</dbReference>
<dbReference type="PANTHER" id="PTHR33383">
    <property type="entry name" value="MEMBRANE PROTEIN INSERTION EFFICIENCY FACTOR-RELATED"/>
    <property type="match status" value="1"/>
</dbReference>
<dbReference type="PANTHER" id="PTHR33383:SF1">
    <property type="entry name" value="MEMBRANE PROTEIN INSERTION EFFICIENCY FACTOR-RELATED"/>
    <property type="match status" value="1"/>
</dbReference>
<dbReference type="Pfam" id="PF01809">
    <property type="entry name" value="YidD"/>
    <property type="match status" value="1"/>
</dbReference>
<dbReference type="SMART" id="SM01234">
    <property type="entry name" value="Haemolytic"/>
    <property type="match status" value="1"/>
</dbReference>
<accession>Q82FE1</accession>
<proteinExistence type="inferred from homology"/>